<name>RLME_COXBN</name>
<dbReference type="EC" id="2.1.1.166" evidence="1"/>
<dbReference type="EMBL" id="CP000733">
    <property type="protein sequence ID" value="ABS78053.1"/>
    <property type="molecule type" value="Genomic_DNA"/>
</dbReference>
<dbReference type="RefSeq" id="WP_010958173.1">
    <property type="nucleotide sequence ID" value="NC_009727.1"/>
</dbReference>
<dbReference type="SMR" id="A9KGE6"/>
<dbReference type="KEGG" id="cbd:CBUD_1441"/>
<dbReference type="HOGENOM" id="CLU_009422_4_0_6"/>
<dbReference type="Proteomes" id="UP000008555">
    <property type="component" value="Chromosome"/>
</dbReference>
<dbReference type="GO" id="GO:0005737">
    <property type="term" value="C:cytoplasm"/>
    <property type="evidence" value="ECO:0007669"/>
    <property type="project" value="UniProtKB-SubCell"/>
</dbReference>
<dbReference type="GO" id="GO:0008650">
    <property type="term" value="F:rRNA (uridine-2'-O-)-methyltransferase activity"/>
    <property type="evidence" value="ECO:0007669"/>
    <property type="project" value="UniProtKB-UniRule"/>
</dbReference>
<dbReference type="FunFam" id="3.40.50.150:FF:000005">
    <property type="entry name" value="Ribosomal RNA large subunit methyltransferase E"/>
    <property type="match status" value="1"/>
</dbReference>
<dbReference type="Gene3D" id="3.40.50.150">
    <property type="entry name" value="Vaccinia Virus protein VP39"/>
    <property type="match status" value="1"/>
</dbReference>
<dbReference type="HAMAP" id="MF_01547">
    <property type="entry name" value="RNA_methyltr_E"/>
    <property type="match status" value="1"/>
</dbReference>
<dbReference type="InterPro" id="IPR050082">
    <property type="entry name" value="RNA_methyltr_RlmE"/>
</dbReference>
<dbReference type="InterPro" id="IPR002877">
    <property type="entry name" value="RNA_MeTrfase_FtsJ_dom"/>
</dbReference>
<dbReference type="InterPro" id="IPR015507">
    <property type="entry name" value="rRNA-MeTfrase_E"/>
</dbReference>
<dbReference type="InterPro" id="IPR029063">
    <property type="entry name" value="SAM-dependent_MTases_sf"/>
</dbReference>
<dbReference type="PANTHER" id="PTHR10920">
    <property type="entry name" value="RIBOSOMAL RNA METHYLTRANSFERASE"/>
    <property type="match status" value="1"/>
</dbReference>
<dbReference type="PANTHER" id="PTHR10920:SF18">
    <property type="entry name" value="RRNA METHYLTRANSFERASE 2, MITOCHONDRIAL"/>
    <property type="match status" value="1"/>
</dbReference>
<dbReference type="Pfam" id="PF01728">
    <property type="entry name" value="FtsJ"/>
    <property type="match status" value="1"/>
</dbReference>
<dbReference type="PIRSF" id="PIRSF005461">
    <property type="entry name" value="23S_rRNA_mtase"/>
    <property type="match status" value="1"/>
</dbReference>
<dbReference type="SUPFAM" id="SSF53335">
    <property type="entry name" value="S-adenosyl-L-methionine-dependent methyltransferases"/>
    <property type="match status" value="1"/>
</dbReference>
<reference key="1">
    <citation type="journal article" date="2009" name="Infect. Immun.">
        <title>Comparative genomics reveal extensive transposon-mediated genomic plasticity and diversity among potential effector proteins within the genus Coxiella.</title>
        <authorList>
            <person name="Beare P.A."/>
            <person name="Unsworth N."/>
            <person name="Andoh M."/>
            <person name="Voth D.E."/>
            <person name="Omsland A."/>
            <person name="Gilk S.D."/>
            <person name="Williams K.P."/>
            <person name="Sobral B.W."/>
            <person name="Kupko J.J. III"/>
            <person name="Porcella S.F."/>
            <person name="Samuel J.E."/>
            <person name="Heinzen R.A."/>
        </authorList>
    </citation>
    <scope>NUCLEOTIDE SEQUENCE [LARGE SCALE GENOMIC DNA]</scope>
    <source>
        <strain>Dugway 5J108-111</strain>
    </source>
</reference>
<organism>
    <name type="scientific">Coxiella burnetii (strain Dugway 5J108-111)</name>
    <dbReference type="NCBI Taxonomy" id="434922"/>
    <lineage>
        <taxon>Bacteria</taxon>
        <taxon>Pseudomonadati</taxon>
        <taxon>Pseudomonadota</taxon>
        <taxon>Gammaproteobacteria</taxon>
        <taxon>Legionellales</taxon>
        <taxon>Coxiellaceae</taxon>
        <taxon>Coxiella</taxon>
    </lineage>
</organism>
<accession>A9KGE6</accession>
<sequence>MTHSKRWLEEHEKDPYVKRAKKEGYPSRAAYKLLEIHQKYKLFKPSMNVIDLGAAPGGWSQVAKDLVGPKGVVIAIDLLPMQSMLDVIFIQGDFNEPEIFNQLEAIVAKKTLTGQVDLVISDMAPNISGIKNVDQSRSLHLVELAWDCAQKLLARGGTFLVKVFQGPGVDRFLINLRPYFNQVKFLKPSASRSRSSEIYILAGEFLGYNQRV</sequence>
<feature type="chain" id="PRO_1000087680" description="Ribosomal RNA large subunit methyltransferase E">
    <location>
        <begin position="1"/>
        <end position="212"/>
    </location>
</feature>
<feature type="active site" description="Proton acceptor" evidence="1">
    <location>
        <position position="162"/>
    </location>
</feature>
<feature type="binding site" evidence="1">
    <location>
        <position position="57"/>
    </location>
    <ligand>
        <name>S-adenosyl-L-methionine</name>
        <dbReference type="ChEBI" id="CHEBI:59789"/>
    </ligand>
</feature>
<feature type="binding site" evidence="1">
    <location>
        <position position="59"/>
    </location>
    <ligand>
        <name>S-adenosyl-L-methionine</name>
        <dbReference type="ChEBI" id="CHEBI:59789"/>
    </ligand>
</feature>
<feature type="binding site" evidence="1">
    <location>
        <position position="77"/>
    </location>
    <ligand>
        <name>S-adenosyl-L-methionine</name>
        <dbReference type="ChEBI" id="CHEBI:59789"/>
    </ligand>
</feature>
<feature type="binding site" evidence="1">
    <location>
        <position position="93"/>
    </location>
    <ligand>
        <name>S-adenosyl-L-methionine</name>
        <dbReference type="ChEBI" id="CHEBI:59789"/>
    </ligand>
</feature>
<feature type="binding site" evidence="1">
    <location>
        <position position="122"/>
    </location>
    <ligand>
        <name>S-adenosyl-L-methionine</name>
        <dbReference type="ChEBI" id="CHEBI:59789"/>
    </ligand>
</feature>
<evidence type="ECO:0000255" key="1">
    <source>
        <dbReference type="HAMAP-Rule" id="MF_01547"/>
    </source>
</evidence>
<gene>
    <name evidence="1" type="primary">rlmE</name>
    <name evidence="1" type="synonym">ftsJ</name>
    <name evidence="1" type="synonym">rrmJ</name>
    <name type="ordered locus">CBUD_1441</name>
</gene>
<comment type="function">
    <text evidence="1">Specifically methylates the uridine in position 2552 of 23S rRNA at the 2'-O position of the ribose in the fully assembled 50S ribosomal subunit.</text>
</comment>
<comment type="catalytic activity">
    <reaction evidence="1">
        <text>uridine(2552) in 23S rRNA + S-adenosyl-L-methionine = 2'-O-methyluridine(2552) in 23S rRNA + S-adenosyl-L-homocysteine + H(+)</text>
        <dbReference type="Rhea" id="RHEA:42720"/>
        <dbReference type="Rhea" id="RHEA-COMP:10202"/>
        <dbReference type="Rhea" id="RHEA-COMP:10203"/>
        <dbReference type="ChEBI" id="CHEBI:15378"/>
        <dbReference type="ChEBI" id="CHEBI:57856"/>
        <dbReference type="ChEBI" id="CHEBI:59789"/>
        <dbReference type="ChEBI" id="CHEBI:65315"/>
        <dbReference type="ChEBI" id="CHEBI:74478"/>
        <dbReference type="EC" id="2.1.1.166"/>
    </reaction>
</comment>
<comment type="subcellular location">
    <subcellularLocation>
        <location evidence="1">Cytoplasm</location>
    </subcellularLocation>
</comment>
<comment type="similarity">
    <text evidence="1">Belongs to the class I-like SAM-binding methyltransferase superfamily. RNA methyltransferase RlmE family.</text>
</comment>
<keyword id="KW-0963">Cytoplasm</keyword>
<keyword id="KW-0489">Methyltransferase</keyword>
<keyword id="KW-0698">rRNA processing</keyword>
<keyword id="KW-0949">S-adenosyl-L-methionine</keyword>
<keyword id="KW-0808">Transferase</keyword>
<proteinExistence type="inferred from homology"/>
<protein>
    <recommendedName>
        <fullName evidence="1">Ribosomal RNA large subunit methyltransferase E</fullName>
        <ecNumber evidence="1">2.1.1.166</ecNumber>
    </recommendedName>
    <alternativeName>
        <fullName evidence="1">23S rRNA Um2552 methyltransferase</fullName>
    </alternativeName>
    <alternativeName>
        <fullName evidence="1">rRNA (uridine-2'-O-)-methyltransferase</fullName>
    </alternativeName>
</protein>